<gene>
    <name type="primary">yipf3</name>
    <name type="ORF">zgc:55279</name>
</gene>
<name>YIPF3_DANRE</name>
<dbReference type="EMBL" id="BC044136">
    <property type="protein sequence ID" value="AAH44136.1"/>
    <property type="molecule type" value="mRNA"/>
</dbReference>
<dbReference type="RefSeq" id="NP_956201.1">
    <property type="nucleotide sequence ID" value="NM_199907.1"/>
</dbReference>
<dbReference type="FunCoup" id="Q803Z2">
    <property type="interactions" value="2412"/>
</dbReference>
<dbReference type="STRING" id="7955.ENSDARP00000025545"/>
<dbReference type="GlyCosmos" id="Q803Z2">
    <property type="glycosylation" value="1 site, No reported glycans"/>
</dbReference>
<dbReference type="PaxDb" id="7955-ENSDARP00000025545"/>
<dbReference type="Ensembl" id="ENSDART00000012759">
    <property type="protein sequence ID" value="ENSDARP00000025545"/>
    <property type="gene ID" value="ENSDARG00000020449"/>
</dbReference>
<dbReference type="GeneID" id="334511"/>
<dbReference type="KEGG" id="dre:334511"/>
<dbReference type="AGR" id="ZFIN:ZDB-GENE-030131-6443"/>
<dbReference type="CTD" id="25844"/>
<dbReference type="ZFIN" id="ZDB-GENE-030131-6443">
    <property type="gene designation" value="yipf3"/>
</dbReference>
<dbReference type="eggNOG" id="KOG3114">
    <property type="taxonomic scope" value="Eukaryota"/>
</dbReference>
<dbReference type="HOGENOM" id="CLU_068070_0_0_1"/>
<dbReference type="InParanoid" id="Q803Z2"/>
<dbReference type="OMA" id="HCIVLFV"/>
<dbReference type="OrthoDB" id="10256463at2759"/>
<dbReference type="PhylomeDB" id="Q803Z2"/>
<dbReference type="TreeFam" id="TF314073"/>
<dbReference type="PRO" id="PR:Q803Z2"/>
<dbReference type="Proteomes" id="UP000000437">
    <property type="component" value="Chromosome 13"/>
</dbReference>
<dbReference type="Bgee" id="ENSDARG00000020449">
    <property type="expression patterns" value="Expressed in zone of skin and 28 other cell types or tissues"/>
</dbReference>
<dbReference type="ExpressionAtlas" id="Q803Z2">
    <property type="expression patterns" value="baseline and differential"/>
</dbReference>
<dbReference type="GO" id="GO:0005794">
    <property type="term" value="C:Golgi apparatus"/>
    <property type="evidence" value="ECO:0000318"/>
    <property type="project" value="GO_Central"/>
</dbReference>
<dbReference type="GO" id="GO:0005886">
    <property type="term" value="C:plasma membrane"/>
    <property type="evidence" value="ECO:0007669"/>
    <property type="project" value="UniProtKB-SubCell"/>
</dbReference>
<dbReference type="GO" id="GO:0030154">
    <property type="term" value="P:cell differentiation"/>
    <property type="evidence" value="ECO:0007669"/>
    <property type="project" value="UniProtKB-KW"/>
</dbReference>
<dbReference type="InterPro" id="IPR051521">
    <property type="entry name" value="tRNA_Mod/Golgi_Maint"/>
</dbReference>
<dbReference type="PANTHER" id="PTHR15627">
    <property type="entry name" value="NATURAL KILLER CELL-SPECIFIC ANTIGEN KLIP1"/>
    <property type="match status" value="1"/>
</dbReference>
<dbReference type="PANTHER" id="PTHR15627:SF14">
    <property type="entry name" value="PROTEIN YIPF3"/>
    <property type="match status" value="1"/>
</dbReference>
<keyword id="KW-1003">Cell membrane</keyword>
<keyword id="KW-0963">Cytoplasm</keyword>
<keyword id="KW-0221">Differentiation</keyword>
<keyword id="KW-0325">Glycoprotein</keyword>
<keyword id="KW-0333">Golgi apparatus</keyword>
<keyword id="KW-0472">Membrane</keyword>
<keyword id="KW-1185">Reference proteome</keyword>
<keyword id="KW-0812">Transmembrane</keyword>
<keyword id="KW-1133">Transmembrane helix</keyword>
<feature type="chain" id="PRO_0000244450" description="Protein YIPF3">
    <location>
        <begin position="1"/>
        <end position="344"/>
    </location>
</feature>
<feature type="topological domain" description="Cytoplasmic" evidence="2">
    <location>
        <begin position="1"/>
        <end position="146"/>
    </location>
</feature>
<feature type="transmembrane region" description="Helical" evidence="3">
    <location>
        <begin position="147"/>
        <end position="167"/>
    </location>
</feature>
<feature type="topological domain" description="Lumenal" evidence="5">
    <location>
        <begin position="168"/>
        <end position="185"/>
    </location>
</feature>
<feature type="transmembrane region" description="Helical" evidence="3">
    <location>
        <begin position="186"/>
        <end position="206"/>
    </location>
</feature>
<feature type="topological domain" description="Cytoplasmic" evidence="5">
    <location>
        <begin position="207"/>
        <end position="212"/>
    </location>
</feature>
<feature type="transmembrane region" description="Helical" evidence="3">
    <location>
        <begin position="213"/>
        <end position="233"/>
    </location>
</feature>
<feature type="topological domain" description="Lumenal" evidence="5">
    <location>
        <begin position="234"/>
        <end position="242"/>
    </location>
</feature>
<feature type="transmembrane region" description="Helical" evidence="3">
    <location>
        <begin position="243"/>
        <end position="263"/>
    </location>
</feature>
<feature type="topological domain" description="Cytoplasmic" evidence="5">
    <location>
        <begin position="264"/>
        <end position="272"/>
    </location>
</feature>
<feature type="transmembrane region" description="Helical" evidence="3">
    <location>
        <begin position="273"/>
        <end position="293"/>
    </location>
</feature>
<feature type="topological domain" description="Lumenal" evidence="2">
    <location>
        <begin position="294"/>
        <end position="344"/>
    </location>
</feature>
<feature type="region of interest" description="Disordered" evidence="4">
    <location>
        <begin position="1"/>
        <end position="24"/>
    </location>
</feature>
<feature type="compositionally biased region" description="Polar residues" evidence="4">
    <location>
        <begin position="1"/>
        <end position="12"/>
    </location>
</feature>
<feature type="glycosylation site" description="N-linked (GlcNAc...) asparagine" evidence="3">
    <location>
        <position position="329"/>
    </location>
</feature>
<protein>
    <recommendedName>
        <fullName>Protein YIPF3</fullName>
    </recommendedName>
    <alternativeName>
        <fullName>YIP1 family member 3</fullName>
    </alternativeName>
</protein>
<organism>
    <name type="scientific">Danio rerio</name>
    <name type="common">Zebrafish</name>
    <name type="synonym">Brachydanio rerio</name>
    <dbReference type="NCBI Taxonomy" id="7955"/>
    <lineage>
        <taxon>Eukaryota</taxon>
        <taxon>Metazoa</taxon>
        <taxon>Chordata</taxon>
        <taxon>Craniata</taxon>
        <taxon>Vertebrata</taxon>
        <taxon>Euteleostomi</taxon>
        <taxon>Actinopterygii</taxon>
        <taxon>Neopterygii</taxon>
        <taxon>Teleostei</taxon>
        <taxon>Ostariophysi</taxon>
        <taxon>Cypriniformes</taxon>
        <taxon>Danionidae</taxon>
        <taxon>Danioninae</taxon>
        <taxon>Danio</taxon>
    </lineage>
</organism>
<accession>Q803Z2</accession>
<proteinExistence type="evidence at transcript level"/>
<sequence length="344" mass="37858">MSASQGSKNTNAEPWGGFDDNIIQGTGSAVIDMENMDDTSGSSFEDVGEMHQRMREEEEVTAEAAATEEDNGEYGEFLGMKGLKGQLGRQVADEVWQAGKRQASKAFNLYANIDILRPYFDVEPIQVRNRLVESLIPVRMINFPQKVAGELYGPMMLVFTLVAILLHGMKTSGTVIREGTLMGTAIGTGFGYWLGVSSFIYFLAYLCNAQITMLQMLSLLGYGLFGHCVVLFITYNVHFHSLFYLLWMVIGGLSTLRMVAVLISRTVGQTPRLILCGSLAALHMLFLLYLHFAYHKMVEGILDTLEGPNIPPIQRVARDVPVVASAVVNATVKSIAAIVQSQQL</sequence>
<comment type="function">
    <text evidence="1">Involved in the maintenance of the Golgi structure. May play a role in hematopoiesis (By similarity).</text>
</comment>
<comment type="subcellular location">
    <subcellularLocation>
        <location evidence="1">Cell membrane</location>
        <topology>Multi-pass membrane protein</topology>
    </subcellularLocation>
    <subcellularLocation>
        <location evidence="1">Golgi apparatus</location>
        <location evidence="1">cis-Golgi network membrane</location>
        <topology>Multi-pass membrane protein</topology>
    </subcellularLocation>
    <subcellularLocation>
        <location evidence="1">Cytoplasm</location>
    </subcellularLocation>
</comment>
<comment type="similarity">
    <text evidence="5">Belongs to the YIP1 family.</text>
</comment>
<evidence type="ECO:0000250" key="1"/>
<evidence type="ECO:0000250" key="2">
    <source>
        <dbReference type="UniProtKB" id="Q9GZM5"/>
    </source>
</evidence>
<evidence type="ECO:0000255" key="3"/>
<evidence type="ECO:0000256" key="4">
    <source>
        <dbReference type="SAM" id="MobiDB-lite"/>
    </source>
</evidence>
<evidence type="ECO:0000305" key="5"/>
<reference key="1">
    <citation type="submission" date="2003-01" db="EMBL/GenBank/DDBJ databases">
        <authorList>
            <consortium name="NIH - Zebrafish Gene Collection (ZGC) project"/>
        </authorList>
    </citation>
    <scope>NUCLEOTIDE SEQUENCE [LARGE SCALE MRNA]</scope>
    <source>
        <strain>AB</strain>
    </source>
</reference>